<gene>
    <name type="primary">PALM</name>
</gene>
<organism>
    <name type="scientific">Sus scrofa</name>
    <name type="common">Pig</name>
    <dbReference type="NCBI Taxonomy" id="9823"/>
    <lineage>
        <taxon>Eukaryota</taxon>
        <taxon>Metazoa</taxon>
        <taxon>Chordata</taxon>
        <taxon>Craniata</taxon>
        <taxon>Vertebrata</taxon>
        <taxon>Euteleostomi</taxon>
        <taxon>Mammalia</taxon>
        <taxon>Eutheria</taxon>
        <taxon>Laurasiatheria</taxon>
        <taxon>Artiodactyla</taxon>
        <taxon>Suina</taxon>
        <taxon>Suidae</taxon>
        <taxon>Sus</taxon>
    </lineage>
</organism>
<protein>
    <recommendedName>
        <fullName>Paralemmin-1</fullName>
    </recommendedName>
    <alternativeName>
        <fullName>Paralemmin</fullName>
    </alternativeName>
</protein>
<dbReference type="EMBL" id="DQ322459">
    <property type="protein sequence ID" value="ABC50000.1"/>
    <property type="molecule type" value="mRNA"/>
</dbReference>
<dbReference type="RefSeq" id="NP_001033725.1">
    <property type="nucleotide sequence ID" value="NM_001038636.1"/>
</dbReference>
<dbReference type="SMR" id="Q2MJV8"/>
<dbReference type="FunCoup" id="Q2MJV8">
    <property type="interactions" value="542"/>
</dbReference>
<dbReference type="STRING" id="9823.ENSSSCP00000056295"/>
<dbReference type="PaxDb" id="9823-ENSSSCP00000014273"/>
<dbReference type="PeptideAtlas" id="Q2MJV8"/>
<dbReference type="GeneID" id="654410"/>
<dbReference type="KEGG" id="ssc:654410"/>
<dbReference type="CTD" id="5064"/>
<dbReference type="eggNOG" id="ENOG502QQ2W">
    <property type="taxonomic scope" value="Eukaryota"/>
</dbReference>
<dbReference type="InParanoid" id="Q2MJV8"/>
<dbReference type="OrthoDB" id="9934905at2759"/>
<dbReference type="Proteomes" id="UP000008227">
    <property type="component" value="Unplaced"/>
</dbReference>
<dbReference type="Proteomes" id="UP000314985">
    <property type="component" value="Unplaced"/>
</dbReference>
<dbReference type="Proteomes" id="UP000694570">
    <property type="component" value="Unplaced"/>
</dbReference>
<dbReference type="Proteomes" id="UP000694571">
    <property type="component" value="Unplaced"/>
</dbReference>
<dbReference type="Proteomes" id="UP000694720">
    <property type="component" value="Unplaced"/>
</dbReference>
<dbReference type="Proteomes" id="UP000694722">
    <property type="component" value="Unplaced"/>
</dbReference>
<dbReference type="Proteomes" id="UP000694723">
    <property type="component" value="Unplaced"/>
</dbReference>
<dbReference type="Proteomes" id="UP000694724">
    <property type="component" value="Unplaced"/>
</dbReference>
<dbReference type="Proteomes" id="UP000694725">
    <property type="component" value="Unplaced"/>
</dbReference>
<dbReference type="Proteomes" id="UP000694726">
    <property type="component" value="Unplaced"/>
</dbReference>
<dbReference type="Proteomes" id="UP000694727">
    <property type="component" value="Unplaced"/>
</dbReference>
<dbReference type="Proteomes" id="UP000694728">
    <property type="component" value="Unplaced"/>
</dbReference>
<dbReference type="GO" id="GO:0016327">
    <property type="term" value="C:apicolateral plasma membrane"/>
    <property type="evidence" value="ECO:0007669"/>
    <property type="project" value="UniProtKB-SubCell"/>
</dbReference>
<dbReference type="GO" id="GO:0030424">
    <property type="term" value="C:axon"/>
    <property type="evidence" value="ECO:0007669"/>
    <property type="project" value="UniProtKB-SubCell"/>
</dbReference>
<dbReference type="GO" id="GO:0016323">
    <property type="term" value="C:basolateral plasma membrane"/>
    <property type="evidence" value="ECO:0007669"/>
    <property type="project" value="UniProtKB-SubCell"/>
</dbReference>
<dbReference type="GO" id="GO:0043197">
    <property type="term" value="C:dendritic spine"/>
    <property type="evidence" value="ECO:0007669"/>
    <property type="project" value="UniProtKB-SubCell"/>
</dbReference>
<dbReference type="GO" id="GO:0030175">
    <property type="term" value="C:filopodium"/>
    <property type="evidence" value="ECO:0000318"/>
    <property type="project" value="GO_Central"/>
</dbReference>
<dbReference type="GO" id="GO:0031527">
    <property type="term" value="C:filopodium membrane"/>
    <property type="evidence" value="ECO:0007669"/>
    <property type="project" value="UniProtKB-SubCell"/>
</dbReference>
<dbReference type="GO" id="GO:0044309">
    <property type="term" value="C:neuron spine"/>
    <property type="evidence" value="ECO:0000318"/>
    <property type="project" value="GO_Central"/>
</dbReference>
<dbReference type="GO" id="GO:0098794">
    <property type="term" value="C:postsynapse"/>
    <property type="evidence" value="ECO:0000318"/>
    <property type="project" value="GO_Central"/>
</dbReference>
<dbReference type="GO" id="GO:0097060">
    <property type="term" value="C:synaptic membrane"/>
    <property type="evidence" value="ECO:0000318"/>
    <property type="project" value="GO_Central"/>
</dbReference>
<dbReference type="GO" id="GO:0007193">
    <property type="term" value="P:adenylate cyclase-inhibiting G protein-coupled receptor signaling pathway"/>
    <property type="evidence" value="ECO:0000318"/>
    <property type="project" value="GO_Central"/>
</dbReference>
<dbReference type="GO" id="GO:0051491">
    <property type="term" value="P:positive regulation of filopodium assembly"/>
    <property type="evidence" value="ECO:0000318"/>
    <property type="project" value="GO_Central"/>
</dbReference>
<dbReference type="GO" id="GO:0008360">
    <property type="term" value="P:regulation of cell shape"/>
    <property type="evidence" value="ECO:0007669"/>
    <property type="project" value="UniProtKB-KW"/>
</dbReference>
<dbReference type="GO" id="GO:0060074">
    <property type="term" value="P:synapse maturation"/>
    <property type="evidence" value="ECO:0000318"/>
    <property type="project" value="GO_Central"/>
</dbReference>
<dbReference type="InterPro" id="IPR004965">
    <property type="entry name" value="Paralemmin"/>
</dbReference>
<dbReference type="PANTHER" id="PTHR10498:SF6">
    <property type="entry name" value="PARALEMMIN-1"/>
    <property type="match status" value="1"/>
</dbReference>
<dbReference type="PANTHER" id="PTHR10498">
    <property type="entry name" value="PARALEMMIN-RELATED"/>
    <property type="match status" value="1"/>
</dbReference>
<dbReference type="Pfam" id="PF03285">
    <property type="entry name" value="Paralemmin"/>
    <property type="match status" value="1"/>
</dbReference>
<sequence length="387" mass="42380">MEVLAAETISQQERLQAIAEKRRRQAEVENRRRQLEDDRRQLQHLKSKALRERWLLEGTPSSASEGDEDMRKQMQEDEQKARLLEESIARLEKEIEELENADTLPAPVKETQVAPSPGPVVPAPCPAQEDRKAEVDLNAQQTPVGTPKEKRISNTPMRMVEGSTMMNAAMYSVEITVEKDKVTGETRVLSSATVLPREHPPQGIKVYEDETKVVHAVDGTAENGIHPLSSSEVDELIHKADEVTLSEAGSAAAPETRGPSEEVVRTTPSRREITGVQAQPGEATSGPPGIQPGQEPPVTMIFMGYQNVEDEAETQKVLGLQDTITAELVVIEDAAEPKEPAPPNGSAAEPLATEGSREENQVGPEAPASDPQDLDMKKQRCKCCSIM</sequence>
<proteinExistence type="evidence at transcript level"/>
<feature type="chain" id="PRO_0000262526" description="Paralemmin-1">
    <location>
        <begin position="1"/>
        <end position="384"/>
    </location>
</feature>
<feature type="propeptide" id="PRO_0000396691" description="Removed in mature form" evidence="5">
    <location>
        <begin position="385"/>
        <end position="387"/>
    </location>
</feature>
<feature type="region of interest" description="Disordered" evidence="6">
    <location>
        <begin position="22"/>
        <end position="78"/>
    </location>
</feature>
<feature type="region of interest" description="Disordered" evidence="6">
    <location>
        <begin position="98"/>
        <end position="133"/>
    </location>
</feature>
<feature type="region of interest" description="Disordered" evidence="6">
    <location>
        <begin position="246"/>
        <end position="297"/>
    </location>
</feature>
<feature type="region of interest" description="Disordered" evidence="6">
    <location>
        <begin position="334"/>
        <end position="378"/>
    </location>
</feature>
<feature type="coiled-coil region" evidence="5">
    <location>
        <begin position="7"/>
        <end position="104"/>
    </location>
</feature>
<feature type="compositionally biased region" description="Basic and acidic residues" evidence="6">
    <location>
        <begin position="25"/>
        <end position="41"/>
    </location>
</feature>
<feature type="compositionally biased region" description="Basic and acidic residues" evidence="6">
    <location>
        <begin position="69"/>
        <end position="78"/>
    </location>
</feature>
<feature type="compositionally biased region" description="Pro residues" evidence="6">
    <location>
        <begin position="116"/>
        <end position="125"/>
    </location>
</feature>
<feature type="compositionally biased region" description="Basic and acidic residues" evidence="6">
    <location>
        <begin position="258"/>
        <end position="273"/>
    </location>
</feature>
<feature type="compositionally biased region" description="Low complexity" evidence="6">
    <location>
        <begin position="286"/>
        <end position="297"/>
    </location>
</feature>
<feature type="modified residue" description="N-acetylmethionine" evidence="2">
    <location>
        <position position="1"/>
    </location>
</feature>
<feature type="modified residue" description="Phosphoserine" evidence="2">
    <location>
        <position position="116"/>
    </location>
</feature>
<feature type="modified residue" description="Phosphothreonine" evidence="2">
    <location>
        <position position="142"/>
    </location>
</feature>
<feature type="modified residue" description="Phosphothreonine" evidence="2">
    <location>
        <position position="146"/>
    </location>
</feature>
<feature type="modified residue" description="Phosphoserine" evidence="2">
    <location>
        <position position="163"/>
    </location>
</feature>
<feature type="modified residue" description="Phosphothreonine" evidence="4">
    <location>
        <position position="244"/>
    </location>
</feature>
<feature type="modified residue" description="Phosphoserine" evidence="3">
    <location>
        <position position="246"/>
    </location>
</feature>
<feature type="modified residue" description="Phosphoserine" evidence="4">
    <location>
        <position position="346"/>
    </location>
</feature>
<feature type="modified residue" description="Phosphoserine" evidence="4">
    <location>
        <position position="369"/>
    </location>
</feature>
<feature type="modified residue" description="Cysteine methyl ester" evidence="5">
    <location>
        <position position="384"/>
    </location>
</feature>
<feature type="lipid moiety-binding region" description="S-palmitoyl cysteine" evidence="5">
    <location>
        <position position="381"/>
    </location>
</feature>
<feature type="lipid moiety-binding region" description="S-palmitoyl cysteine" evidence="5">
    <location>
        <position position="383"/>
    </location>
</feature>
<feature type="lipid moiety-binding region" description="S-farnesyl cysteine" evidence="5">
    <location>
        <position position="384"/>
    </location>
</feature>
<keyword id="KW-0007">Acetylation</keyword>
<keyword id="KW-1003">Cell membrane</keyword>
<keyword id="KW-0966">Cell projection</keyword>
<keyword id="KW-0133">Cell shape</keyword>
<keyword id="KW-0175">Coiled coil</keyword>
<keyword id="KW-0449">Lipoprotein</keyword>
<keyword id="KW-0472">Membrane</keyword>
<keyword id="KW-0488">Methylation</keyword>
<keyword id="KW-0564">Palmitate</keyword>
<keyword id="KW-0597">Phosphoprotein</keyword>
<keyword id="KW-0636">Prenylation</keyword>
<keyword id="KW-1185">Reference proteome</keyword>
<keyword id="KW-0770">Synapse</keyword>
<reference key="1">
    <citation type="submission" date="2005-12" db="EMBL/GenBank/DDBJ databases">
        <authorList>
            <person name="Neumann N.G."/>
            <person name="Kilimann M.W."/>
        </authorList>
    </citation>
    <scope>NUCLEOTIDE SEQUENCE [MRNA]</scope>
    <source>
        <tissue>Brain</tissue>
    </source>
</reference>
<accession>Q2MJV8</accession>
<comment type="function">
    <text evidence="1">Involved in plasma membrane dynamics and cell process formation. Necessary for axonal and dendritic filopodia induction, for dendritic spine maturation and synapse formation in a palmitoylation-dependent manner (By similarity).</text>
</comment>
<comment type="subunit">
    <text evidence="1">Interacts with dopamine receptor DRD3.</text>
</comment>
<comment type="subcellular location">
    <subcellularLocation>
        <location>Cell membrane</location>
        <topology>Lipid-anchor</topology>
        <orientation>Cytoplasmic side</orientation>
    </subcellularLocation>
    <subcellularLocation>
        <location>Cell projection</location>
        <location>Filopodium membrane</location>
        <topology>Lipid-anchor</topology>
    </subcellularLocation>
    <subcellularLocation>
        <location evidence="1">Cell projection</location>
        <location evidence="1">Axon</location>
    </subcellularLocation>
    <subcellularLocation>
        <location>Cell projection</location>
        <location>Dendrite</location>
    </subcellularLocation>
    <subcellularLocation>
        <location>Cell projection</location>
        <location>Dendritic spine</location>
    </subcellularLocation>
    <subcellularLocation>
        <location evidence="1">Basolateral cell membrane</location>
        <topology evidence="1">Lipid-anchor</topology>
    </subcellularLocation>
    <subcellularLocation>
        <location evidence="1">Apicolateral cell membrane</location>
        <topology evidence="1">Lipid-anchor</topology>
    </subcellularLocation>
    <text evidence="1">Translocation to the plasma membrane is enhanced upon stimulation of neuronal activity.</text>
</comment>
<comment type="PTM">
    <text evidence="1">Phosphorylated.</text>
</comment>
<comment type="similarity">
    <text evidence="7">Belongs to the paralemmin family.</text>
</comment>
<name>PALM_PIG</name>
<evidence type="ECO:0000250" key="1"/>
<evidence type="ECO:0000250" key="2">
    <source>
        <dbReference type="UniProtKB" id="O75781"/>
    </source>
</evidence>
<evidence type="ECO:0000250" key="3">
    <source>
        <dbReference type="UniProtKB" id="Q920Q0"/>
    </source>
</evidence>
<evidence type="ECO:0000250" key="4">
    <source>
        <dbReference type="UniProtKB" id="Q9Z0P4"/>
    </source>
</evidence>
<evidence type="ECO:0000255" key="5"/>
<evidence type="ECO:0000256" key="6">
    <source>
        <dbReference type="SAM" id="MobiDB-lite"/>
    </source>
</evidence>
<evidence type="ECO:0000305" key="7"/>